<proteinExistence type="inferred from homology"/>
<dbReference type="EC" id="2.1.1.199" evidence="1"/>
<dbReference type="EMBL" id="FM180568">
    <property type="protein sequence ID" value="CAS07635.1"/>
    <property type="molecule type" value="Genomic_DNA"/>
</dbReference>
<dbReference type="RefSeq" id="WP_000970480.1">
    <property type="nucleotide sequence ID" value="NC_011601.1"/>
</dbReference>
<dbReference type="SMR" id="B7UID2"/>
<dbReference type="KEGG" id="ecg:E2348C_0087"/>
<dbReference type="HOGENOM" id="CLU_038422_2_0_6"/>
<dbReference type="Proteomes" id="UP000008205">
    <property type="component" value="Chromosome"/>
</dbReference>
<dbReference type="GO" id="GO:0005737">
    <property type="term" value="C:cytoplasm"/>
    <property type="evidence" value="ECO:0007669"/>
    <property type="project" value="UniProtKB-SubCell"/>
</dbReference>
<dbReference type="GO" id="GO:0071424">
    <property type="term" value="F:rRNA (cytosine-N4-)-methyltransferase activity"/>
    <property type="evidence" value="ECO:0007669"/>
    <property type="project" value="UniProtKB-UniRule"/>
</dbReference>
<dbReference type="GO" id="GO:0070475">
    <property type="term" value="P:rRNA base methylation"/>
    <property type="evidence" value="ECO:0007669"/>
    <property type="project" value="UniProtKB-UniRule"/>
</dbReference>
<dbReference type="FunFam" id="1.10.150.170:FF:000001">
    <property type="entry name" value="Ribosomal RNA small subunit methyltransferase H"/>
    <property type="match status" value="1"/>
</dbReference>
<dbReference type="Gene3D" id="1.10.150.170">
    <property type="entry name" value="Putative methyltransferase TM0872, insert domain"/>
    <property type="match status" value="1"/>
</dbReference>
<dbReference type="Gene3D" id="3.40.50.150">
    <property type="entry name" value="Vaccinia Virus protein VP39"/>
    <property type="match status" value="1"/>
</dbReference>
<dbReference type="HAMAP" id="MF_01007">
    <property type="entry name" value="16SrRNA_methyltr_H"/>
    <property type="match status" value="1"/>
</dbReference>
<dbReference type="InterPro" id="IPR002903">
    <property type="entry name" value="RsmH"/>
</dbReference>
<dbReference type="InterPro" id="IPR023397">
    <property type="entry name" value="SAM-dep_MeTrfase_MraW_recog"/>
</dbReference>
<dbReference type="InterPro" id="IPR029063">
    <property type="entry name" value="SAM-dependent_MTases_sf"/>
</dbReference>
<dbReference type="NCBIfam" id="TIGR00006">
    <property type="entry name" value="16S rRNA (cytosine(1402)-N(4))-methyltransferase RsmH"/>
    <property type="match status" value="1"/>
</dbReference>
<dbReference type="PANTHER" id="PTHR11265:SF0">
    <property type="entry name" value="12S RRNA N4-METHYLCYTIDINE METHYLTRANSFERASE"/>
    <property type="match status" value="1"/>
</dbReference>
<dbReference type="PANTHER" id="PTHR11265">
    <property type="entry name" value="S-ADENOSYL-METHYLTRANSFERASE MRAW"/>
    <property type="match status" value="1"/>
</dbReference>
<dbReference type="Pfam" id="PF01795">
    <property type="entry name" value="Methyltransf_5"/>
    <property type="match status" value="1"/>
</dbReference>
<dbReference type="PIRSF" id="PIRSF004486">
    <property type="entry name" value="MraW"/>
    <property type="match status" value="1"/>
</dbReference>
<dbReference type="SUPFAM" id="SSF81799">
    <property type="entry name" value="Putative methyltransferase TM0872, insert domain"/>
    <property type="match status" value="1"/>
</dbReference>
<dbReference type="SUPFAM" id="SSF53335">
    <property type="entry name" value="S-adenosyl-L-methionine-dependent methyltransferases"/>
    <property type="match status" value="1"/>
</dbReference>
<accession>B7UID2</accession>
<sequence length="313" mass="34868">MMENYKHTTVLLDEAVNGLNIRPDGIYIDGTFGRGGHSRLILSQLGEEGRLLAIDRDPQAIAVAKTIDDPRFSIIHGPFSALGEYVAERDLIGKIDGILLDLGVSSPQLDDAERGFSFMRDGPLDMRMDPTRGQSAAEWLQTAEEADIAWVLKTYGEERFAKRIARAIVERNREQPMTRTKELAEVVAAATPVKDKFKHPATRTFQAVRIWVNSELEEIEQALKSSLNVLASGGRLSIISFHSLEDRIVKRFMRENSRGPQVPAGLPMTEEQLKKLGGRQLRALGKLMPGEEEVAENPRARSSVLRIAERTNA</sequence>
<feature type="chain" id="PRO_0000386876" description="Ribosomal RNA small subunit methyltransferase H">
    <location>
        <begin position="1"/>
        <end position="313"/>
    </location>
</feature>
<feature type="binding site" evidence="1">
    <location>
        <begin position="35"/>
        <end position="37"/>
    </location>
    <ligand>
        <name>S-adenosyl-L-methionine</name>
        <dbReference type="ChEBI" id="CHEBI:59789"/>
    </ligand>
</feature>
<feature type="binding site" evidence="1">
    <location>
        <position position="55"/>
    </location>
    <ligand>
        <name>S-adenosyl-L-methionine</name>
        <dbReference type="ChEBI" id="CHEBI:59789"/>
    </ligand>
</feature>
<feature type="binding site" evidence="1">
    <location>
        <position position="79"/>
    </location>
    <ligand>
        <name>S-adenosyl-L-methionine</name>
        <dbReference type="ChEBI" id="CHEBI:59789"/>
    </ligand>
</feature>
<feature type="binding site" evidence="1">
    <location>
        <position position="101"/>
    </location>
    <ligand>
        <name>S-adenosyl-L-methionine</name>
        <dbReference type="ChEBI" id="CHEBI:59789"/>
    </ligand>
</feature>
<feature type="binding site" evidence="1">
    <location>
        <position position="108"/>
    </location>
    <ligand>
        <name>S-adenosyl-L-methionine</name>
        <dbReference type="ChEBI" id="CHEBI:59789"/>
    </ligand>
</feature>
<comment type="function">
    <text evidence="1">Specifically methylates the N4 position of cytidine in position 1402 (C1402) of 16S rRNA.</text>
</comment>
<comment type="catalytic activity">
    <reaction evidence="1">
        <text>cytidine(1402) in 16S rRNA + S-adenosyl-L-methionine = N(4)-methylcytidine(1402) in 16S rRNA + S-adenosyl-L-homocysteine + H(+)</text>
        <dbReference type="Rhea" id="RHEA:42928"/>
        <dbReference type="Rhea" id="RHEA-COMP:10286"/>
        <dbReference type="Rhea" id="RHEA-COMP:10287"/>
        <dbReference type="ChEBI" id="CHEBI:15378"/>
        <dbReference type="ChEBI" id="CHEBI:57856"/>
        <dbReference type="ChEBI" id="CHEBI:59789"/>
        <dbReference type="ChEBI" id="CHEBI:74506"/>
        <dbReference type="ChEBI" id="CHEBI:82748"/>
        <dbReference type="EC" id="2.1.1.199"/>
    </reaction>
</comment>
<comment type="subcellular location">
    <subcellularLocation>
        <location evidence="1">Cytoplasm</location>
    </subcellularLocation>
</comment>
<comment type="similarity">
    <text evidence="1">Belongs to the methyltransferase superfamily. RsmH family.</text>
</comment>
<reference key="1">
    <citation type="journal article" date="2009" name="J. Bacteriol.">
        <title>Complete genome sequence and comparative genome analysis of enteropathogenic Escherichia coli O127:H6 strain E2348/69.</title>
        <authorList>
            <person name="Iguchi A."/>
            <person name="Thomson N.R."/>
            <person name="Ogura Y."/>
            <person name="Saunders D."/>
            <person name="Ooka T."/>
            <person name="Henderson I.R."/>
            <person name="Harris D."/>
            <person name="Asadulghani M."/>
            <person name="Kurokawa K."/>
            <person name="Dean P."/>
            <person name="Kenny B."/>
            <person name="Quail M.A."/>
            <person name="Thurston S."/>
            <person name="Dougan G."/>
            <person name="Hayashi T."/>
            <person name="Parkhill J."/>
            <person name="Frankel G."/>
        </authorList>
    </citation>
    <scope>NUCLEOTIDE SEQUENCE [LARGE SCALE GENOMIC DNA]</scope>
    <source>
        <strain>E2348/69 / EPEC</strain>
    </source>
</reference>
<organism>
    <name type="scientific">Escherichia coli O127:H6 (strain E2348/69 / EPEC)</name>
    <dbReference type="NCBI Taxonomy" id="574521"/>
    <lineage>
        <taxon>Bacteria</taxon>
        <taxon>Pseudomonadati</taxon>
        <taxon>Pseudomonadota</taxon>
        <taxon>Gammaproteobacteria</taxon>
        <taxon>Enterobacterales</taxon>
        <taxon>Enterobacteriaceae</taxon>
        <taxon>Escherichia</taxon>
    </lineage>
</organism>
<gene>
    <name evidence="1" type="primary">rsmH</name>
    <name type="synonym">mraW</name>
    <name type="ordered locus">E2348C_0087</name>
</gene>
<protein>
    <recommendedName>
        <fullName evidence="1">Ribosomal RNA small subunit methyltransferase H</fullName>
        <ecNumber evidence="1">2.1.1.199</ecNumber>
    </recommendedName>
    <alternativeName>
        <fullName evidence="1">16S rRNA m(4)C1402 methyltransferase</fullName>
    </alternativeName>
    <alternativeName>
        <fullName evidence="1">rRNA (cytosine-N(4)-)-methyltransferase RsmH</fullName>
    </alternativeName>
</protein>
<name>RSMH_ECO27</name>
<keyword id="KW-0963">Cytoplasm</keyword>
<keyword id="KW-0489">Methyltransferase</keyword>
<keyword id="KW-1185">Reference proteome</keyword>
<keyword id="KW-0698">rRNA processing</keyword>
<keyword id="KW-0949">S-adenosyl-L-methionine</keyword>
<keyword id="KW-0808">Transferase</keyword>
<evidence type="ECO:0000255" key="1">
    <source>
        <dbReference type="HAMAP-Rule" id="MF_01007"/>
    </source>
</evidence>